<gene>
    <name evidence="5" type="primary">anuD</name>
    <name type="ORF">PROQFM164_S03g001177</name>
</gene>
<proteinExistence type="inferred from homology"/>
<keyword id="KW-0521">NADP</keyword>
<keyword id="KW-0560">Oxidoreductase</keyword>
<keyword id="KW-1185">Reference proteome</keyword>
<accession>W6QCM8</accession>
<comment type="function">
    <text evidence="4 7">Highly reducing polyketide synthase; part of the gene cluster that mediates the biosynthesis of annullatin D, an alkylated aromatic polyketide with a fused dihydrobenzofuran lactone ring system that exhibits potent agonistic activities toward the cannabinoid receptors (PubMed:35939524). AnuD does not seem to play a role within the pathway (PubMed:35939524). The annullatin backbone 2-hydroxymethyl-3-pentylphenol is assembled from one acetyl-CoA starter unit and 5 malonyl-CoA elongation units by cooperation of the highly reducing polyketide synthase anuA, the short-chain dehydrogenase anuB and the oxidoreductase anuC, before being hydroxylated at the C-5 alkyl chain by the cytochrome P450 monooxygenase anuE to form (8S)-annullatin E. The prenyltransferase anuH subsequently installs one isoprenyl group at the benzene ring to form (8S)-annullatin J. Enzymatic or nonenzymatic dihydro-benzofuran ring formation between the prenyl and the phenolic hydroxyl groups in (8S)-annullatin J results in two diastereomers (2S,9S)-annullatin H and compound 12. The intermediate (2S,9S)-annullatin H is then converted to (2S,9S)-annullatin D by the FAD-linked oxidoreductase anuG-catalyzed five-member lactone ring formation. The isomer 12 acts as a substrate for the short-chain dehydrogenase anuF and is oxidized to (2R)-annullatin F, which is subsequently acetylated by an acetyltransferase leading to (2R)-annullatin G formation. The remaining enzymes identified within the cluster, anuD, anuI and anuJ, seem not to be involved in annullatin biosynthesis (Probable).</text>
</comment>
<comment type="disruption phenotype">
    <text evidence="4">Does not affect the annullatin D biosynthesis pathway.</text>
</comment>
<comment type="similarity">
    <text evidence="6">Belongs to the short-chain dehydrogenases/reductases (SDR) family.</text>
</comment>
<name>ANUD_PENRF</name>
<protein>
    <recommendedName>
        <fullName evidence="5">Short-chain dehydrogenase anuD</fullName>
        <ecNumber evidence="7">1.1.1.-</ecNumber>
    </recommendedName>
    <alternativeName>
        <fullName evidence="5">Annullatin D biosynthesis cluster protein D</fullName>
    </alternativeName>
</protein>
<feature type="chain" id="PRO_0000458205" description="Short-chain dehydrogenase anuD">
    <location>
        <begin position="1"/>
        <end position="381"/>
    </location>
</feature>
<feature type="active site" description="Proton acceptor" evidence="3">
    <location>
        <position position="244"/>
    </location>
</feature>
<feature type="active site" description="Proton donor" evidence="2">
    <location>
        <position position="244"/>
    </location>
</feature>
<feature type="active site" description="Lowers pKa of active site Tyr" evidence="2">
    <location>
        <position position="248"/>
    </location>
</feature>
<feature type="binding site" evidence="1">
    <location>
        <position position="84"/>
    </location>
    <ligand>
        <name>NADP(+)</name>
        <dbReference type="ChEBI" id="CHEBI:58349"/>
    </ligand>
</feature>
<feature type="binding site" evidence="1">
    <location>
        <position position="109"/>
    </location>
    <ligand>
        <name>NADP(+)</name>
        <dbReference type="ChEBI" id="CHEBI:58349"/>
    </ligand>
</feature>
<feature type="binding site" evidence="1">
    <location>
        <position position="133"/>
    </location>
    <ligand>
        <name>NADP(+)</name>
        <dbReference type="ChEBI" id="CHEBI:58349"/>
    </ligand>
</feature>
<feature type="binding site" evidence="2">
    <location>
        <position position="158"/>
    </location>
    <ligand>
        <name>NADP(+)</name>
        <dbReference type="ChEBI" id="CHEBI:58349"/>
    </ligand>
</feature>
<feature type="binding site" evidence="2">
    <location>
        <position position="244"/>
    </location>
    <ligand>
        <name>NADP(+)</name>
        <dbReference type="ChEBI" id="CHEBI:58349"/>
    </ligand>
</feature>
<feature type="binding site" evidence="2">
    <location>
        <position position="248"/>
    </location>
    <ligand>
        <name>NADP(+)</name>
        <dbReference type="ChEBI" id="CHEBI:58349"/>
    </ligand>
</feature>
<sequence>MRNDRPVRITRGSGDLYVYATGITTLSTNFPDDLGKSPSTLPEISTASMSALSFLYSQLFVEPPVPTHDFQGQTVIITGSNRGIGFEAARHLLRLNVSRLILAARSAEKGQIAADTLEQLTGRSGVIQVEELDMANQESVQEFATRMEMCRIDAVLLNAGIYTHDFVWADNHESTLTVNVINTFLLAILLLPALRRSSKTWVIQPCISFVASDRHVMYDLPEWKTQNTFQVLNDRQQARMHERYPISKLLEILLARAMAKQLDSNPPNGTGNIIVNSFTPGYCTSGLIENVHGITGFALWLLSKATARTTEVGGRTLVAAIAQGDKSHGKYLNDGHIDESALSPFVRSQEGILAMEKLWEELMEILEQKRPGIGLLLSPVP</sequence>
<evidence type="ECO:0000250" key="1">
    <source>
        <dbReference type="UniProtKB" id="L0E2Z4"/>
    </source>
</evidence>
<evidence type="ECO:0000250" key="2">
    <source>
        <dbReference type="UniProtKB" id="O93868"/>
    </source>
</evidence>
<evidence type="ECO:0000250" key="3">
    <source>
        <dbReference type="UniProtKB" id="Q92506"/>
    </source>
</evidence>
<evidence type="ECO:0000269" key="4">
    <source>
    </source>
</evidence>
<evidence type="ECO:0000303" key="5">
    <source>
    </source>
</evidence>
<evidence type="ECO:0000305" key="6"/>
<evidence type="ECO:0000305" key="7">
    <source>
    </source>
</evidence>
<reference key="1">
    <citation type="journal article" date="2014" name="Nat. Commun.">
        <title>Multiple recent horizontal transfers of a large genomic region in cheese making fungi.</title>
        <authorList>
            <person name="Cheeseman K."/>
            <person name="Ropars J."/>
            <person name="Renault P."/>
            <person name="Dupont J."/>
            <person name="Gouzy J."/>
            <person name="Branca A."/>
            <person name="Abraham A.-L."/>
            <person name="Ceppi M."/>
            <person name="Conseiller E."/>
            <person name="Debuchy R."/>
            <person name="Malagnac F."/>
            <person name="Goarin A."/>
            <person name="Silar P."/>
            <person name="Lacoste S."/>
            <person name="Sallet E."/>
            <person name="Bensimon A."/>
            <person name="Giraud T."/>
            <person name="Brygoo Y."/>
        </authorList>
    </citation>
    <scope>NUCLEOTIDE SEQUENCE [LARGE SCALE GENOMIC DNA]</scope>
    <source>
        <strain>FM164</strain>
    </source>
</reference>
<reference key="2">
    <citation type="journal article" date="2022" name="Org. Lett.">
        <title>Biosynthesis of Annullatin D in Penicillium roqueforti Implies Oxidative Lactonization between Two Hydroxyl Groups Catalyzed by a BBE-like Enzyme.</title>
        <authorList>
            <person name="Xiang P."/>
            <person name="Kemmerich B."/>
            <person name="Yang L."/>
            <person name="Li S.M."/>
        </authorList>
    </citation>
    <scope>FUNCTION</scope>
    <scope>DISRUPTION PHENOTYPE</scope>
</reference>
<organism>
    <name type="scientific">Penicillium roqueforti (strain FM164)</name>
    <dbReference type="NCBI Taxonomy" id="1365484"/>
    <lineage>
        <taxon>Eukaryota</taxon>
        <taxon>Fungi</taxon>
        <taxon>Dikarya</taxon>
        <taxon>Ascomycota</taxon>
        <taxon>Pezizomycotina</taxon>
        <taxon>Eurotiomycetes</taxon>
        <taxon>Eurotiomycetidae</taxon>
        <taxon>Eurotiales</taxon>
        <taxon>Aspergillaceae</taxon>
        <taxon>Penicillium</taxon>
    </lineage>
</organism>
<dbReference type="EC" id="1.1.1.-" evidence="7"/>
<dbReference type="EMBL" id="HG792017">
    <property type="protein sequence ID" value="CDM34453.1"/>
    <property type="molecule type" value="Genomic_DNA"/>
</dbReference>
<dbReference type="SMR" id="W6QCM8"/>
<dbReference type="STRING" id="1365484.W6QCM8"/>
<dbReference type="OMA" id="NAFTPGY"/>
<dbReference type="OrthoDB" id="542013at2759"/>
<dbReference type="Proteomes" id="UP000030686">
    <property type="component" value="Unassembled WGS sequence"/>
</dbReference>
<dbReference type="GO" id="GO:0016491">
    <property type="term" value="F:oxidoreductase activity"/>
    <property type="evidence" value="ECO:0007669"/>
    <property type="project" value="UniProtKB-KW"/>
</dbReference>
<dbReference type="Gene3D" id="3.40.50.720">
    <property type="entry name" value="NAD(P)-binding Rossmann-like Domain"/>
    <property type="match status" value="1"/>
</dbReference>
<dbReference type="InterPro" id="IPR036291">
    <property type="entry name" value="NAD(P)-bd_dom_sf"/>
</dbReference>
<dbReference type="InterPro" id="IPR002347">
    <property type="entry name" value="SDR_fam"/>
</dbReference>
<dbReference type="PANTHER" id="PTHR43157:SF31">
    <property type="entry name" value="PHOSPHATIDYLINOSITOL-GLYCAN BIOSYNTHESIS CLASS F PROTEIN"/>
    <property type="match status" value="1"/>
</dbReference>
<dbReference type="PANTHER" id="PTHR43157">
    <property type="entry name" value="PHOSPHATIDYLINOSITOL-GLYCAN BIOSYNTHESIS CLASS F PROTEIN-RELATED"/>
    <property type="match status" value="1"/>
</dbReference>
<dbReference type="Pfam" id="PF00106">
    <property type="entry name" value="adh_short"/>
    <property type="match status" value="1"/>
</dbReference>
<dbReference type="PRINTS" id="PR00081">
    <property type="entry name" value="GDHRDH"/>
</dbReference>
<dbReference type="SUPFAM" id="SSF51735">
    <property type="entry name" value="NAD(P)-binding Rossmann-fold domains"/>
    <property type="match status" value="1"/>
</dbReference>